<accession>Q8NXQ4</accession>
<organism>
    <name type="scientific">Staphylococcus aureus (strain MW2)</name>
    <dbReference type="NCBI Taxonomy" id="196620"/>
    <lineage>
        <taxon>Bacteria</taxon>
        <taxon>Bacillati</taxon>
        <taxon>Bacillota</taxon>
        <taxon>Bacilli</taxon>
        <taxon>Bacillales</taxon>
        <taxon>Staphylococcaceae</taxon>
        <taxon>Staphylococcus</taxon>
    </lineage>
</organism>
<gene>
    <name evidence="1" type="primary">uppP</name>
    <name type="synonym">bacA</name>
    <name type="synonym">upk</name>
    <name type="ordered locus">MW0645</name>
</gene>
<comment type="function">
    <text evidence="1">Catalyzes the dephosphorylation of undecaprenyl diphosphate (UPP). Confers resistance to bacitracin.</text>
</comment>
<comment type="catalytic activity">
    <reaction evidence="1">
        <text>di-trans,octa-cis-undecaprenyl diphosphate + H2O = di-trans,octa-cis-undecaprenyl phosphate + phosphate + H(+)</text>
        <dbReference type="Rhea" id="RHEA:28094"/>
        <dbReference type="ChEBI" id="CHEBI:15377"/>
        <dbReference type="ChEBI" id="CHEBI:15378"/>
        <dbReference type="ChEBI" id="CHEBI:43474"/>
        <dbReference type="ChEBI" id="CHEBI:58405"/>
        <dbReference type="ChEBI" id="CHEBI:60392"/>
        <dbReference type="EC" id="3.6.1.27"/>
    </reaction>
</comment>
<comment type="subcellular location">
    <subcellularLocation>
        <location evidence="1">Cell membrane</location>
        <topology evidence="1">Multi-pass membrane protein</topology>
    </subcellularLocation>
</comment>
<comment type="miscellaneous">
    <text>Bacitracin is thought to be involved in the inhibition of peptidoglycan synthesis by sequestering undecaprenyl diphosphate, thereby reducing the pool of lipid carrier available.</text>
</comment>
<comment type="similarity">
    <text evidence="1">Belongs to the UppP family.</text>
</comment>
<evidence type="ECO:0000255" key="1">
    <source>
        <dbReference type="HAMAP-Rule" id="MF_01006"/>
    </source>
</evidence>
<keyword id="KW-0046">Antibiotic resistance</keyword>
<keyword id="KW-1003">Cell membrane</keyword>
<keyword id="KW-0133">Cell shape</keyword>
<keyword id="KW-0961">Cell wall biogenesis/degradation</keyword>
<keyword id="KW-0378">Hydrolase</keyword>
<keyword id="KW-0472">Membrane</keyword>
<keyword id="KW-0573">Peptidoglycan synthesis</keyword>
<keyword id="KW-0812">Transmembrane</keyword>
<keyword id="KW-1133">Transmembrane helix</keyword>
<protein>
    <recommendedName>
        <fullName evidence="1">Undecaprenyl-diphosphatase</fullName>
        <ecNumber evidence="1">3.6.1.27</ecNumber>
    </recommendedName>
    <alternativeName>
        <fullName evidence="1">Bacitracin resistance protein</fullName>
    </alternativeName>
    <alternativeName>
        <fullName evidence="1">Undecaprenyl pyrophosphate phosphatase</fullName>
    </alternativeName>
</protein>
<reference key="1">
    <citation type="journal article" date="2002" name="Lancet">
        <title>Genome and virulence determinants of high virulence community-acquired MRSA.</title>
        <authorList>
            <person name="Baba T."/>
            <person name="Takeuchi F."/>
            <person name="Kuroda M."/>
            <person name="Yuzawa H."/>
            <person name="Aoki K."/>
            <person name="Oguchi A."/>
            <person name="Nagai Y."/>
            <person name="Iwama N."/>
            <person name="Asano K."/>
            <person name="Naimi T."/>
            <person name="Kuroda H."/>
            <person name="Cui L."/>
            <person name="Yamamoto K."/>
            <person name="Hiramatsu K."/>
        </authorList>
    </citation>
    <scope>NUCLEOTIDE SEQUENCE [LARGE SCALE GENOMIC DNA]</scope>
    <source>
        <strain>MW2</strain>
    </source>
</reference>
<name>UPPP_STAAW</name>
<dbReference type="EC" id="3.6.1.27" evidence="1"/>
<dbReference type="EMBL" id="BA000033">
    <property type="protein sequence ID" value="BAB94510.1"/>
    <property type="molecule type" value="Genomic_DNA"/>
</dbReference>
<dbReference type="RefSeq" id="WP_000469892.1">
    <property type="nucleotide sequence ID" value="NC_003923.1"/>
</dbReference>
<dbReference type="SMR" id="Q8NXQ4"/>
<dbReference type="KEGG" id="sam:MW0645"/>
<dbReference type="HOGENOM" id="CLU_060296_2_0_9"/>
<dbReference type="GO" id="GO:0005886">
    <property type="term" value="C:plasma membrane"/>
    <property type="evidence" value="ECO:0007669"/>
    <property type="project" value="UniProtKB-SubCell"/>
</dbReference>
<dbReference type="GO" id="GO:0050380">
    <property type="term" value="F:undecaprenyl-diphosphatase activity"/>
    <property type="evidence" value="ECO:0007669"/>
    <property type="project" value="UniProtKB-UniRule"/>
</dbReference>
<dbReference type="GO" id="GO:0071555">
    <property type="term" value="P:cell wall organization"/>
    <property type="evidence" value="ECO:0007669"/>
    <property type="project" value="UniProtKB-KW"/>
</dbReference>
<dbReference type="GO" id="GO:0009252">
    <property type="term" value="P:peptidoglycan biosynthetic process"/>
    <property type="evidence" value="ECO:0007669"/>
    <property type="project" value="UniProtKB-KW"/>
</dbReference>
<dbReference type="GO" id="GO:0008360">
    <property type="term" value="P:regulation of cell shape"/>
    <property type="evidence" value="ECO:0007669"/>
    <property type="project" value="UniProtKB-KW"/>
</dbReference>
<dbReference type="GO" id="GO:0046677">
    <property type="term" value="P:response to antibiotic"/>
    <property type="evidence" value="ECO:0007669"/>
    <property type="project" value="UniProtKB-UniRule"/>
</dbReference>
<dbReference type="HAMAP" id="MF_01006">
    <property type="entry name" value="Undec_diphosphatase"/>
    <property type="match status" value="1"/>
</dbReference>
<dbReference type="InterPro" id="IPR003824">
    <property type="entry name" value="UppP"/>
</dbReference>
<dbReference type="NCBIfam" id="NF001390">
    <property type="entry name" value="PRK00281.1-4"/>
    <property type="match status" value="1"/>
</dbReference>
<dbReference type="NCBIfam" id="TIGR00753">
    <property type="entry name" value="undec_PP_bacA"/>
    <property type="match status" value="1"/>
</dbReference>
<dbReference type="PANTHER" id="PTHR30622">
    <property type="entry name" value="UNDECAPRENYL-DIPHOSPHATASE"/>
    <property type="match status" value="1"/>
</dbReference>
<dbReference type="PANTHER" id="PTHR30622:SF3">
    <property type="entry name" value="UNDECAPRENYL-DIPHOSPHATASE"/>
    <property type="match status" value="1"/>
</dbReference>
<dbReference type="Pfam" id="PF02673">
    <property type="entry name" value="BacA"/>
    <property type="match status" value="1"/>
</dbReference>
<sequence length="291" mass="32326">MFIIELIKGIILGVVEGLTEFAPVSSTGHMILVDDMWLKSSEFLGSQSAFTFKIVIQLGSVFAAAWVFRERFLEILHIGKHKHVEGDNNQQRRSKPRRLNLLHVLVGMVPAGILGLLFDDFIEEHLFSVPTVMIGLFVGAIYMIIADKYSAKVKNPQTVDQINYFQAFVIGISQAVAMWPGFSRSGSTISTGVLMKLNHKAASDFTFIMAVPIMLAASGLSLLKHYQDIQITDIPFYILGFLAAFTVGLIAIKTFLHLINKIKLIPFAIYRIVLVIFIAILYFGFGIGKGI</sequence>
<feature type="chain" id="PRO_0000151204" description="Undecaprenyl-diphosphatase">
    <location>
        <begin position="1"/>
        <end position="291"/>
    </location>
</feature>
<feature type="transmembrane region" description="Helical" evidence="1">
    <location>
        <begin position="1"/>
        <end position="21"/>
    </location>
</feature>
<feature type="transmembrane region" description="Helical" evidence="1">
    <location>
        <begin position="48"/>
        <end position="68"/>
    </location>
</feature>
<feature type="transmembrane region" description="Helical" evidence="1">
    <location>
        <begin position="102"/>
        <end position="122"/>
    </location>
</feature>
<feature type="transmembrane region" description="Helical" evidence="1">
    <location>
        <begin position="126"/>
        <end position="146"/>
    </location>
</feature>
<feature type="transmembrane region" description="Helical" evidence="1">
    <location>
        <begin position="162"/>
        <end position="182"/>
    </location>
</feature>
<feature type="transmembrane region" description="Helical" evidence="1">
    <location>
        <begin position="203"/>
        <end position="223"/>
    </location>
</feature>
<feature type="transmembrane region" description="Helical" evidence="1">
    <location>
        <begin position="236"/>
        <end position="256"/>
    </location>
</feature>
<feature type="transmembrane region" description="Helical" evidence="1">
    <location>
        <begin position="267"/>
        <end position="287"/>
    </location>
</feature>
<proteinExistence type="inferred from homology"/>